<name>Y5714_PSEA8</name>
<sequence>MSIRDWPEAERPREKLLEQGAAALSDAELLAIFLRTGVTGCSAVELSRRLLSEFGGLRALLEADLASFCGHLGLGVAKYAQLQAVLEMGRRHLAERLRRDSILESPQAVRDYLKARLRHEQHEVFACLFLDTRHRVLAFEVLFQGSIDGASVYPRQVVKRTLAHNAAALILTHNHPSGDARPSLADRQLTARLKEALALIDVRVLDHFIIGDGEPLSLAEYGWL</sequence>
<evidence type="ECO:0000255" key="1">
    <source>
        <dbReference type="PROSITE-ProRule" id="PRU01182"/>
    </source>
</evidence>
<evidence type="ECO:0000305" key="2"/>
<organism>
    <name type="scientific">Pseudomonas aeruginosa (strain LESB58)</name>
    <dbReference type="NCBI Taxonomy" id="557722"/>
    <lineage>
        <taxon>Bacteria</taxon>
        <taxon>Pseudomonadati</taxon>
        <taxon>Pseudomonadota</taxon>
        <taxon>Gammaproteobacteria</taxon>
        <taxon>Pseudomonadales</taxon>
        <taxon>Pseudomonadaceae</taxon>
        <taxon>Pseudomonas</taxon>
    </lineage>
</organism>
<protein>
    <recommendedName>
        <fullName>UPF0758 protein PLES_57141</fullName>
    </recommendedName>
</protein>
<reference key="1">
    <citation type="journal article" date="2009" name="Genome Res.">
        <title>Newly introduced genomic prophage islands are critical determinants of in vivo competitiveness in the Liverpool epidemic strain of Pseudomonas aeruginosa.</title>
        <authorList>
            <person name="Winstanley C."/>
            <person name="Langille M.G.I."/>
            <person name="Fothergill J.L."/>
            <person name="Kukavica-Ibrulj I."/>
            <person name="Paradis-Bleau C."/>
            <person name="Sanschagrin F."/>
            <person name="Thomson N.R."/>
            <person name="Winsor G.L."/>
            <person name="Quail M.A."/>
            <person name="Lennard N."/>
            <person name="Bignell A."/>
            <person name="Clarke L."/>
            <person name="Seeger K."/>
            <person name="Saunders D."/>
            <person name="Harris D."/>
            <person name="Parkhill J."/>
            <person name="Hancock R.E.W."/>
            <person name="Brinkman F.S.L."/>
            <person name="Levesque R.C."/>
        </authorList>
    </citation>
    <scope>NUCLEOTIDE SEQUENCE [LARGE SCALE GENOMIC DNA]</scope>
    <source>
        <strain>LESB58</strain>
    </source>
</reference>
<keyword id="KW-0378">Hydrolase</keyword>
<keyword id="KW-0479">Metal-binding</keyword>
<keyword id="KW-0482">Metalloprotease</keyword>
<keyword id="KW-0645">Protease</keyword>
<keyword id="KW-0862">Zinc</keyword>
<proteinExistence type="inferred from homology"/>
<gene>
    <name type="ordered locus">PLES_57141</name>
</gene>
<accession>B7V5L0</accession>
<dbReference type="EMBL" id="FM209186">
    <property type="protein sequence ID" value="CAW30468.1"/>
    <property type="molecule type" value="Genomic_DNA"/>
</dbReference>
<dbReference type="SMR" id="B7V5L0"/>
<dbReference type="KEGG" id="pag:PLES_57141"/>
<dbReference type="HOGENOM" id="CLU_073529_0_1_6"/>
<dbReference type="GO" id="GO:0046872">
    <property type="term" value="F:metal ion binding"/>
    <property type="evidence" value="ECO:0007669"/>
    <property type="project" value="UniProtKB-KW"/>
</dbReference>
<dbReference type="GO" id="GO:0008237">
    <property type="term" value="F:metallopeptidase activity"/>
    <property type="evidence" value="ECO:0007669"/>
    <property type="project" value="UniProtKB-KW"/>
</dbReference>
<dbReference type="GO" id="GO:0006508">
    <property type="term" value="P:proteolysis"/>
    <property type="evidence" value="ECO:0007669"/>
    <property type="project" value="UniProtKB-KW"/>
</dbReference>
<dbReference type="CDD" id="cd08071">
    <property type="entry name" value="MPN_DUF2466"/>
    <property type="match status" value="1"/>
</dbReference>
<dbReference type="FunFam" id="3.40.140.10:FF:000032">
    <property type="entry name" value="DNA repair protein RadC"/>
    <property type="match status" value="1"/>
</dbReference>
<dbReference type="Gene3D" id="3.40.140.10">
    <property type="entry name" value="Cytidine Deaminase, domain 2"/>
    <property type="match status" value="1"/>
</dbReference>
<dbReference type="InterPro" id="IPR037518">
    <property type="entry name" value="MPN"/>
</dbReference>
<dbReference type="InterPro" id="IPR025657">
    <property type="entry name" value="RadC_JAB"/>
</dbReference>
<dbReference type="InterPro" id="IPR010994">
    <property type="entry name" value="RuvA_2-like"/>
</dbReference>
<dbReference type="InterPro" id="IPR001405">
    <property type="entry name" value="UPF0758"/>
</dbReference>
<dbReference type="InterPro" id="IPR020891">
    <property type="entry name" value="UPF0758_CS"/>
</dbReference>
<dbReference type="InterPro" id="IPR046778">
    <property type="entry name" value="UPF0758_N"/>
</dbReference>
<dbReference type="NCBIfam" id="NF000642">
    <property type="entry name" value="PRK00024.1"/>
    <property type="match status" value="1"/>
</dbReference>
<dbReference type="NCBIfam" id="TIGR00608">
    <property type="entry name" value="radc"/>
    <property type="match status" value="1"/>
</dbReference>
<dbReference type="PANTHER" id="PTHR30471">
    <property type="entry name" value="DNA REPAIR PROTEIN RADC"/>
    <property type="match status" value="1"/>
</dbReference>
<dbReference type="PANTHER" id="PTHR30471:SF3">
    <property type="entry name" value="UPF0758 PROTEIN YEES-RELATED"/>
    <property type="match status" value="1"/>
</dbReference>
<dbReference type="Pfam" id="PF04002">
    <property type="entry name" value="RadC"/>
    <property type="match status" value="1"/>
</dbReference>
<dbReference type="Pfam" id="PF20582">
    <property type="entry name" value="UPF0758_N"/>
    <property type="match status" value="1"/>
</dbReference>
<dbReference type="SUPFAM" id="SSF102712">
    <property type="entry name" value="JAB1/MPN domain"/>
    <property type="match status" value="1"/>
</dbReference>
<dbReference type="SUPFAM" id="SSF47781">
    <property type="entry name" value="RuvA domain 2-like"/>
    <property type="match status" value="1"/>
</dbReference>
<dbReference type="PROSITE" id="PS50249">
    <property type="entry name" value="MPN"/>
    <property type="match status" value="1"/>
</dbReference>
<dbReference type="PROSITE" id="PS01302">
    <property type="entry name" value="UPF0758"/>
    <property type="match status" value="1"/>
</dbReference>
<feature type="chain" id="PRO_1000116361" description="UPF0758 protein PLES_57141">
    <location>
        <begin position="1"/>
        <end position="224"/>
    </location>
</feature>
<feature type="domain" description="MPN" evidence="1">
    <location>
        <begin position="102"/>
        <end position="224"/>
    </location>
</feature>
<feature type="short sequence motif" description="JAMM motif" evidence="1">
    <location>
        <begin position="173"/>
        <end position="186"/>
    </location>
</feature>
<feature type="binding site" evidence="1">
    <location>
        <position position="173"/>
    </location>
    <ligand>
        <name>Zn(2+)</name>
        <dbReference type="ChEBI" id="CHEBI:29105"/>
        <note>catalytic</note>
    </ligand>
</feature>
<feature type="binding site" evidence="1">
    <location>
        <position position="175"/>
    </location>
    <ligand>
        <name>Zn(2+)</name>
        <dbReference type="ChEBI" id="CHEBI:29105"/>
        <note>catalytic</note>
    </ligand>
</feature>
<feature type="binding site" evidence="1">
    <location>
        <position position="186"/>
    </location>
    <ligand>
        <name>Zn(2+)</name>
        <dbReference type="ChEBI" id="CHEBI:29105"/>
        <note>catalytic</note>
    </ligand>
</feature>
<comment type="similarity">
    <text evidence="2">Belongs to the UPF0758 family.</text>
</comment>